<sequence length="483" mass="53600">MGFTVAIVGRPNVGKSTLFNRLVGRKLALVDDLPGVTRDRRIHDAKLYDLKFQVIDTAGLEEAANDSLEARMRAQTEAAIQEADVILFVVDAKNGLTPTDSTFAEVVRRSGKPVVLVANKAEARGAQSGMYDAFQLGLGEPCPISAEHGQGMPDLRDAIVELLGEERVFADEKEEETADEVFTPKAVGELIGDDIEDPDEEEIPAYDATKPLRIAIVGRPNAGKSTLINTMLGEDRLLTGPEAGITRDSISVDWEWRGRKIKLFDTAGLRRKSRVQEKLEKLSVADGLRAIRFAEVVIIVLDATIPFEKQDLQIADLIIREGRAPIIAFNKWDLIEDRQMVLADLYEKTARLLPQVRGLRAVPISGERGQGIDKLMENVVKTHEIWNRRVSTGRLNRWLAGVIAHQPPPAVSGRRLKVKYMTQVKTRPPGFVVSCSRPDAMPQSYVRYLINGLRETFDMPGVPIRLSLRTSDNPFAGRAKKKK</sequence>
<keyword id="KW-0342">GTP-binding</keyword>
<keyword id="KW-0547">Nucleotide-binding</keyword>
<keyword id="KW-1185">Reference proteome</keyword>
<keyword id="KW-0677">Repeat</keyword>
<keyword id="KW-0690">Ribosome biogenesis</keyword>
<organism>
    <name type="scientific">Brucella anthropi (strain ATCC 49188 / DSM 6882 / CCUG 24695 / JCM 21032 / LMG 3331 / NBRC 15819 / NCTC 12168 / Alc 37)</name>
    <name type="common">Ochrobactrum anthropi</name>
    <dbReference type="NCBI Taxonomy" id="439375"/>
    <lineage>
        <taxon>Bacteria</taxon>
        <taxon>Pseudomonadati</taxon>
        <taxon>Pseudomonadota</taxon>
        <taxon>Alphaproteobacteria</taxon>
        <taxon>Hyphomicrobiales</taxon>
        <taxon>Brucellaceae</taxon>
        <taxon>Brucella/Ochrobactrum group</taxon>
        <taxon>Brucella</taxon>
    </lineage>
</organism>
<feature type="chain" id="PRO_1000011683" description="GTPase Der">
    <location>
        <begin position="1"/>
        <end position="483"/>
    </location>
</feature>
<feature type="domain" description="EngA-type G 1">
    <location>
        <begin position="3"/>
        <end position="167"/>
    </location>
</feature>
<feature type="domain" description="EngA-type G 2">
    <location>
        <begin position="212"/>
        <end position="387"/>
    </location>
</feature>
<feature type="domain" description="KH-like" evidence="1">
    <location>
        <begin position="388"/>
        <end position="472"/>
    </location>
</feature>
<feature type="binding site" evidence="1">
    <location>
        <begin position="9"/>
        <end position="16"/>
    </location>
    <ligand>
        <name>GTP</name>
        <dbReference type="ChEBI" id="CHEBI:37565"/>
        <label>1</label>
    </ligand>
</feature>
<feature type="binding site" evidence="1">
    <location>
        <begin position="56"/>
        <end position="60"/>
    </location>
    <ligand>
        <name>GTP</name>
        <dbReference type="ChEBI" id="CHEBI:37565"/>
        <label>1</label>
    </ligand>
</feature>
<feature type="binding site" evidence="1">
    <location>
        <begin position="119"/>
        <end position="122"/>
    </location>
    <ligand>
        <name>GTP</name>
        <dbReference type="ChEBI" id="CHEBI:37565"/>
        <label>1</label>
    </ligand>
</feature>
<feature type="binding site" evidence="1">
    <location>
        <begin position="218"/>
        <end position="225"/>
    </location>
    <ligand>
        <name>GTP</name>
        <dbReference type="ChEBI" id="CHEBI:37565"/>
        <label>2</label>
    </ligand>
</feature>
<feature type="binding site" evidence="1">
    <location>
        <begin position="265"/>
        <end position="269"/>
    </location>
    <ligand>
        <name>GTP</name>
        <dbReference type="ChEBI" id="CHEBI:37565"/>
        <label>2</label>
    </ligand>
</feature>
<feature type="binding site" evidence="1">
    <location>
        <begin position="330"/>
        <end position="333"/>
    </location>
    <ligand>
        <name>GTP</name>
        <dbReference type="ChEBI" id="CHEBI:37565"/>
        <label>2</label>
    </ligand>
</feature>
<accession>A6WW65</accession>
<dbReference type="EMBL" id="CP000758">
    <property type="protein sequence ID" value="ABS13219.1"/>
    <property type="molecule type" value="Genomic_DNA"/>
</dbReference>
<dbReference type="RefSeq" id="WP_012090772.1">
    <property type="nucleotide sequence ID" value="NC_009667.1"/>
</dbReference>
<dbReference type="SMR" id="A6WW65"/>
<dbReference type="STRING" id="439375.Oant_0488"/>
<dbReference type="KEGG" id="oan:Oant_0488"/>
<dbReference type="PATRIC" id="fig|439375.7.peg.521"/>
<dbReference type="eggNOG" id="COG1160">
    <property type="taxonomic scope" value="Bacteria"/>
</dbReference>
<dbReference type="HOGENOM" id="CLU_016077_5_0_5"/>
<dbReference type="PhylomeDB" id="A6WW65"/>
<dbReference type="Proteomes" id="UP000002301">
    <property type="component" value="Chromosome 1"/>
</dbReference>
<dbReference type="GO" id="GO:0005525">
    <property type="term" value="F:GTP binding"/>
    <property type="evidence" value="ECO:0007669"/>
    <property type="project" value="UniProtKB-UniRule"/>
</dbReference>
<dbReference type="GO" id="GO:0042254">
    <property type="term" value="P:ribosome biogenesis"/>
    <property type="evidence" value="ECO:0007669"/>
    <property type="project" value="UniProtKB-KW"/>
</dbReference>
<dbReference type="CDD" id="cd01894">
    <property type="entry name" value="EngA1"/>
    <property type="match status" value="1"/>
</dbReference>
<dbReference type="CDD" id="cd01895">
    <property type="entry name" value="EngA2"/>
    <property type="match status" value="1"/>
</dbReference>
<dbReference type="FunFam" id="3.30.300.20:FF:000004">
    <property type="entry name" value="GTPase Der"/>
    <property type="match status" value="1"/>
</dbReference>
<dbReference type="FunFam" id="3.40.50.300:FF:000057">
    <property type="entry name" value="GTPase Der"/>
    <property type="match status" value="1"/>
</dbReference>
<dbReference type="Gene3D" id="3.30.300.20">
    <property type="match status" value="1"/>
</dbReference>
<dbReference type="Gene3D" id="3.40.50.300">
    <property type="entry name" value="P-loop containing nucleotide triphosphate hydrolases"/>
    <property type="match status" value="2"/>
</dbReference>
<dbReference type="HAMAP" id="MF_00195">
    <property type="entry name" value="GTPase_Der"/>
    <property type="match status" value="1"/>
</dbReference>
<dbReference type="InterPro" id="IPR031166">
    <property type="entry name" value="G_ENGA"/>
</dbReference>
<dbReference type="InterPro" id="IPR006073">
    <property type="entry name" value="GTP-bd"/>
</dbReference>
<dbReference type="InterPro" id="IPR016484">
    <property type="entry name" value="GTPase_Der"/>
</dbReference>
<dbReference type="InterPro" id="IPR032859">
    <property type="entry name" value="KH_dom-like"/>
</dbReference>
<dbReference type="InterPro" id="IPR015946">
    <property type="entry name" value="KH_dom-like_a/b"/>
</dbReference>
<dbReference type="InterPro" id="IPR027417">
    <property type="entry name" value="P-loop_NTPase"/>
</dbReference>
<dbReference type="InterPro" id="IPR005225">
    <property type="entry name" value="Small_GTP-bd"/>
</dbReference>
<dbReference type="NCBIfam" id="TIGR03594">
    <property type="entry name" value="GTPase_EngA"/>
    <property type="match status" value="1"/>
</dbReference>
<dbReference type="NCBIfam" id="TIGR00231">
    <property type="entry name" value="small_GTP"/>
    <property type="match status" value="2"/>
</dbReference>
<dbReference type="PANTHER" id="PTHR43834">
    <property type="entry name" value="GTPASE DER"/>
    <property type="match status" value="1"/>
</dbReference>
<dbReference type="PANTHER" id="PTHR43834:SF6">
    <property type="entry name" value="GTPASE DER"/>
    <property type="match status" value="1"/>
</dbReference>
<dbReference type="Pfam" id="PF14714">
    <property type="entry name" value="KH_dom-like"/>
    <property type="match status" value="1"/>
</dbReference>
<dbReference type="Pfam" id="PF01926">
    <property type="entry name" value="MMR_HSR1"/>
    <property type="match status" value="2"/>
</dbReference>
<dbReference type="PIRSF" id="PIRSF006485">
    <property type="entry name" value="GTP-binding_EngA"/>
    <property type="match status" value="1"/>
</dbReference>
<dbReference type="PRINTS" id="PR00326">
    <property type="entry name" value="GTP1OBG"/>
</dbReference>
<dbReference type="SUPFAM" id="SSF52540">
    <property type="entry name" value="P-loop containing nucleoside triphosphate hydrolases"/>
    <property type="match status" value="2"/>
</dbReference>
<dbReference type="PROSITE" id="PS51712">
    <property type="entry name" value="G_ENGA"/>
    <property type="match status" value="2"/>
</dbReference>
<protein>
    <recommendedName>
        <fullName evidence="1">GTPase Der</fullName>
    </recommendedName>
    <alternativeName>
        <fullName evidence="1">GTP-binding protein EngA</fullName>
    </alternativeName>
</protein>
<evidence type="ECO:0000255" key="1">
    <source>
        <dbReference type="HAMAP-Rule" id="MF_00195"/>
    </source>
</evidence>
<reference key="1">
    <citation type="journal article" date="2011" name="J. Bacteriol.">
        <title>Genome of Ochrobactrum anthropi ATCC 49188 T, a versatile opportunistic pathogen and symbiont of several eukaryotic hosts.</title>
        <authorList>
            <person name="Chain P.S."/>
            <person name="Lang D.M."/>
            <person name="Comerci D.J."/>
            <person name="Malfatti S.A."/>
            <person name="Vergez L.M."/>
            <person name="Shin M."/>
            <person name="Ugalde R.A."/>
            <person name="Garcia E."/>
            <person name="Tolmasky M.E."/>
        </authorList>
    </citation>
    <scope>NUCLEOTIDE SEQUENCE [LARGE SCALE GENOMIC DNA]</scope>
    <source>
        <strain>ATCC 49188 / DSM 6882 / CCUG 24695 / JCM 21032 / LMG 3331 / NBRC 15819 / NCTC 12168 / Alc 37</strain>
    </source>
</reference>
<name>DER_BRUA4</name>
<gene>
    <name evidence="1" type="primary">der</name>
    <name type="synonym">engA</name>
    <name type="ordered locus">Oant_0488</name>
</gene>
<proteinExistence type="inferred from homology"/>
<comment type="function">
    <text evidence="1">GTPase that plays an essential role in the late steps of ribosome biogenesis.</text>
</comment>
<comment type="subunit">
    <text evidence="1">Associates with the 50S ribosomal subunit.</text>
</comment>
<comment type="similarity">
    <text evidence="1">Belongs to the TRAFAC class TrmE-Era-EngA-EngB-Septin-like GTPase superfamily. EngA (Der) GTPase family.</text>
</comment>